<comment type="function">
    <text evidence="3">Phosphorylates Ins(1,3,4,5,6)P5 at position 2 to form Ins(1,2,3,4,5,6)P6 (InsP6 or phytate). InsP6 is involved in many processes such as mRNA export, non-homologous end-joining, endocytosis and ion channel regulation. InsP6 also acts as a key regulator of left-right asymmetry in embryo, probably by regulating asymmetric Ca(2+) during left-right specification.</text>
</comment>
<comment type="catalytic activity">
    <reaction evidence="3">
        <text>1D-myo-inositol 1,3,4,5,6-pentakisphosphate + ATP = 1D-myo-inositol hexakisphosphate + ADP + H(+)</text>
        <dbReference type="Rhea" id="RHEA:20313"/>
        <dbReference type="ChEBI" id="CHEBI:15378"/>
        <dbReference type="ChEBI" id="CHEBI:30616"/>
        <dbReference type="ChEBI" id="CHEBI:57733"/>
        <dbReference type="ChEBI" id="CHEBI:58130"/>
        <dbReference type="ChEBI" id="CHEBI:456216"/>
        <dbReference type="EC" id="2.7.1.158"/>
    </reaction>
</comment>
<comment type="subcellular location">
    <subcellularLocation>
        <location evidence="1">Cytoplasm</location>
    </subcellularLocation>
    <subcellularLocation>
        <location evidence="1">Nucleus</location>
    </subcellularLocation>
</comment>
<comment type="tissue specificity">
    <text evidence="3">Expressed both maternally and zygotically. Expressed in cleavage-stage embryos. Ubiquitously distributed throughout blastula stages of embryogenesis. At the onset of gastrulation, it is enriched in cells around the blastoderm margin. At shield stage, expression is detected in the deep involuted cells that contribute to mesendoderm. During mid and late gastrula stages, it is strongly expressed in axial mesendoderm. However, it is not present in the nascent tailbud at yolk plug closure (YPC) stage. Expression in axial mesendoderm is reduced at the 2 somite stage (SS). At 6 SS, it is expressed in cells surrounding Kupffer's vesicle, but apparently not within. By 10 SS, it is no longer detected as a specific signal above background.</text>
</comment>
<comment type="domain">
    <text>The EXKPK motif is conserved in inositol-pentakisphosphate 2-kinases of both family 1 and 2.</text>
</comment>
<comment type="similarity">
    <text evidence="4">Belongs to the IPK1 type 2 family.</text>
</comment>
<comment type="sequence caution" evidence="4">
    <conflict type="erroneous initiation">
        <sequence resource="EMBL-CDS" id="CAK11040"/>
    </conflict>
</comment>
<proteinExistence type="evidence at protein level"/>
<protein>
    <recommendedName>
        <fullName>Inositol-pentakisphosphate 2-kinase</fullName>
        <ecNumber>2.7.1.158</ecNumber>
    </recommendedName>
    <alternativeName>
        <fullName>Inositol-1,3,4,5,6-pentakisphosphate 2-kinase</fullName>
    </alternativeName>
    <alternativeName>
        <fullName>Ins(1,3,4,5,6)P5 2-kinase</fullName>
        <shortName>InsP5 2-kinase</shortName>
    </alternativeName>
</protein>
<feature type="chain" id="PRO_0000110532" description="Inositol-pentakisphosphate 2-kinase">
    <location>
        <begin position="1"/>
        <end position="483"/>
    </location>
</feature>
<feature type="region of interest" description="Disordered" evidence="2">
    <location>
        <begin position="279"/>
        <end position="298"/>
    </location>
</feature>
<feature type="short sequence motif" description="EXKPK motif">
    <location>
        <begin position="140"/>
        <end position="144"/>
    </location>
</feature>
<feature type="compositionally biased region" description="Basic and acidic residues" evidence="2">
    <location>
        <begin position="281"/>
        <end position="297"/>
    </location>
</feature>
<feature type="sequence conflict" description="In Ref. 3; AAH91783." evidence="4" ref="3">
    <original>R</original>
    <variation>G</variation>
    <location>
        <position position="83"/>
    </location>
</feature>
<feature type="sequence conflict" description="In Ref. 3; AAH91783." evidence="4" ref="3">
    <original>K</original>
    <variation>E</variation>
    <location>
        <position position="95"/>
    </location>
</feature>
<feature type="sequence conflict" description="In Ref. 1; AAY79345." evidence="4" ref="1">
    <original>I</original>
    <variation>S</variation>
    <location>
        <position position="356"/>
    </location>
</feature>
<gene>
    <name type="primary">ippk</name>
    <name type="synonym">ipk1</name>
    <name type="ORF">si:dkey-42i9.3</name>
    <name type="ORF">zgc:110769</name>
</gene>
<dbReference type="EC" id="2.7.1.158"/>
<dbReference type="EMBL" id="DQ075212">
    <property type="protein sequence ID" value="AAY79345.1"/>
    <property type="molecule type" value="mRNA"/>
</dbReference>
<dbReference type="EMBL" id="BX465868">
    <property type="protein sequence ID" value="CAK11040.1"/>
    <property type="status" value="ALT_INIT"/>
    <property type="molecule type" value="Genomic_DNA"/>
</dbReference>
<dbReference type="EMBL" id="BC091783">
    <property type="protein sequence ID" value="AAH91783.1"/>
    <property type="molecule type" value="mRNA"/>
</dbReference>
<dbReference type="RefSeq" id="NP_001014346.1">
    <property type="nucleotide sequence ID" value="NM_001014324.1"/>
</dbReference>
<dbReference type="SMR" id="Q4JL91"/>
<dbReference type="FunCoup" id="Q4JL91">
    <property type="interactions" value="966"/>
</dbReference>
<dbReference type="STRING" id="7955.ENSDARP00000113709"/>
<dbReference type="PaxDb" id="7955-ENSDARP00000113709"/>
<dbReference type="Ensembl" id="ENSDART00000131217">
    <property type="protein sequence ID" value="ENSDARP00000113709"/>
    <property type="gene ID" value="ENSDARG00000003446"/>
</dbReference>
<dbReference type="GeneID" id="541511"/>
<dbReference type="KEGG" id="dre:541511"/>
<dbReference type="AGR" id="ZFIN:ZDB-GENE-050327-41"/>
<dbReference type="CTD" id="64768"/>
<dbReference type="ZFIN" id="ZDB-GENE-050327-41">
    <property type="gene designation" value="ippk"/>
</dbReference>
<dbReference type="eggNOG" id="KOG4749">
    <property type="taxonomic scope" value="Eukaryota"/>
</dbReference>
<dbReference type="HOGENOM" id="CLU_033188_1_0_1"/>
<dbReference type="InParanoid" id="Q4JL91"/>
<dbReference type="OMA" id="HRQHCIV"/>
<dbReference type="OrthoDB" id="272370at2759"/>
<dbReference type="PhylomeDB" id="Q4JL91"/>
<dbReference type="TreeFam" id="TF106142"/>
<dbReference type="Reactome" id="R-DRE-1855167">
    <property type="pathway name" value="Synthesis of pyrophosphates in the cytosol"/>
</dbReference>
<dbReference type="Reactome" id="R-DRE-1855191">
    <property type="pathway name" value="Synthesis of IPs in the nucleus"/>
</dbReference>
<dbReference type="PRO" id="PR:Q4JL91"/>
<dbReference type="Proteomes" id="UP000000437">
    <property type="component" value="Chromosome 22"/>
</dbReference>
<dbReference type="Bgee" id="ENSDARG00000003446">
    <property type="expression patterns" value="Expressed in early embryo and 28 other cell types or tissues"/>
</dbReference>
<dbReference type="GO" id="GO:0005813">
    <property type="term" value="C:centrosome"/>
    <property type="evidence" value="ECO:0000314"/>
    <property type="project" value="ZFIN"/>
</dbReference>
<dbReference type="GO" id="GO:0036064">
    <property type="term" value="C:ciliary basal body"/>
    <property type="evidence" value="ECO:0000314"/>
    <property type="project" value="ZFIN"/>
</dbReference>
<dbReference type="GO" id="GO:0005737">
    <property type="term" value="C:cytoplasm"/>
    <property type="evidence" value="ECO:0007669"/>
    <property type="project" value="UniProtKB-SubCell"/>
</dbReference>
<dbReference type="GO" id="GO:0005576">
    <property type="term" value="C:extracellular region"/>
    <property type="evidence" value="ECO:0007669"/>
    <property type="project" value="GOC"/>
</dbReference>
<dbReference type="GO" id="GO:0005634">
    <property type="term" value="C:nucleus"/>
    <property type="evidence" value="ECO:0000318"/>
    <property type="project" value="GO_Central"/>
</dbReference>
<dbReference type="GO" id="GO:0005524">
    <property type="term" value="F:ATP binding"/>
    <property type="evidence" value="ECO:0007669"/>
    <property type="project" value="UniProtKB-KW"/>
</dbReference>
<dbReference type="GO" id="GO:0035299">
    <property type="term" value="F:inositol-1,3,4,5,6-pentakisphosphate 2-kinase activity"/>
    <property type="evidence" value="ECO:0000314"/>
    <property type="project" value="ZFIN"/>
</dbReference>
<dbReference type="GO" id="GO:0007368">
    <property type="term" value="P:determination of left/right symmetry"/>
    <property type="evidence" value="ECO:0000315"/>
    <property type="project" value="ZFIN"/>
</dbReference>
<dbReference type="GO" id="GO:0060287">
    <property type="term" value="P:epithelial cilium movement involved in determination of left/right asymmetry"/>
    <property type="evidence" value="ECO:0000315"/>
    <property type="project" value="ZFIN"/>
</dbReference>
<dbReference type="GO" id="GO:0032958">
    <property type="term" value="P:inositol phosphate biosynthetic process"/>
    <property type="evidence" value="ECO:0000318"/>
    <property type="project" value="GO_Central"/>
</dbReference>
<dbReference type="GO" id="GO:0032402">
    <property type="term" value="P:melanosome transport"/>
    <property type="evidence" value="ECO:0000315"/>
    <property type="project" value="ZFIN"/>
</dbReference>
<dbReference type="FunFam" id="3.30.200.110:FF:000001">
    <property type="entry name" value="Inositol-pentakisphosphate 2-kinase"/>
    <property type="match status" value="1"/>
</dbReference>
<dbReference type="Gene3D" id="3.30.200.110">
    <property type="entry name" value="Inositol-pentakisphosphate 2-kinase, N-lobe"/>
    <property type="match status" value="1"/>
</dbReference>
<dbReference type="InterPro" id="IPR009286">
    <property type="entry name" value="Ins_P5_2-kin"/>
</dbReference>
<dbReference type="InterPro" id="IPR043001">
    <property type="entry name" value="IP5_2-K_N_lobe"/>
</dbReference>
<dbReference type="PANTHER" id="PTHR14456">
    <property type="entry name" value="INOSITOL POLYPHOSPHATE KINASE 1"/>
    <property type="match status" value="1"/>
</dbReference>
<dbReference type="PANTHER" id="PTHR14456:SF2">
    <property type="entry name" value="INOSITOL-PENTAKISPHOSPHATE 2-KINASE"/>
    <property type="match status" value="1"/>
</dbReference>
<dbReference type="Pfam" id="PF06090">
    <property type="entry name" value="Ins_P5_2-kin"/>
    <property type="match status" value="1"/>
</dbReference>
<sequence>MELDKMDENDWKYHGEGNKSIVVSHLRHCQVLRLLKVPSEDSAHTRQTAEQTLRHILNIMDYSKHVMKPLLGEKYVHSGEVVRLPLDFLRQMSLKVQQERPELRCDKVMDTFSGCGLCLPDLTQLPLHHLRDHRPPICVEIKPKCGFLPFSRHMTKECKWKVCRFCMHQHYKLANGKWKRLSRYCPLDLFSGSKQRMYVALKNLLEEPQNNLKIFKGGELIFSCKDDAKQQPDLNNLIQHLRPYFPHTNGLYNGHQPGKVILNEFIQVICSALLSGGDSNRSGEPRKMHLSESKPHCEASPFPRDLIRNGHHGLPKDSVLAKILQVQMLDNLDIEGIYPLYKRVEQYLEEFPKERIRLQIDGPYDESFMDTVKSCLNEDDGSVEYAIGKVHQYRVAMTAKDCSVMITFAPCEEDEEHKLNLEKPRFTYSVSILDLDTKPYEGIPHQYKLDSKIVNYYLRSTQAPPPSSLYKERQECTLLFHAV</sequence>
<accession>Q4JL91</accession>
<accession>Q1LXA9</accession>
<accession>Q58ES1</accession>
<name>IPPK_DANRE</name>
<evidence type="ECO:0000250" key="1"/>
<evidence type="ECO:0000256" key="2">
    <source>
        <dbReference type="SAM" id="MobiDB-lite"/>
    </source>
</evidence>
<evidence type="ECO:0000269" key="3">
    <source>
    </source>
</evidence>
<evidence type="ECO:0000305" key="4"/>
<reference key="1">
    <citation type="journal article" date="2005" name="Dev. Cell">
        <title>Inositol polyphosphates regulate zebrafish left-right asymmetry.</title>
        <authorList>
            <person name="Sarmah B."/>
            <person name="Latimer A.J."/>
            <person name="Appel B."/>
            <person name="Wente S.R."/>
        </authorList>
    </citation>
    <scope>NUCLEOTIDE SEQUENCE [MRNA]</scope>
    <scope>FUNCTION</scope>
    <scope>CATALYTIC ACTIVITY</scope>
    <scope>TISSUE SPECIFICITY</scope>
</reference>
<reference key="2">
    <citation type="journal article" date="2013" name="Nature">
        <title>The zebrafish reference genome sequence and its relationship to the human genome.</title>
        <authorList>
            <person name="Howe K."/>
            <person name="Clark M.D."/>
            <person name="Torroja C.F."/>
            <person name="Torrance J."/>
            <person name="Berthelot C."/>
            <person name="Muffato M."/>
            <person name="Collins J.E."/>
            <person name="Humphray S."/>
            <person name="McLaren K."/>
            <person name="Matthews L."/>
            <person name="McLaren S."/>
            <person name="Sealy I."/>
            <person name="Caccamo M."/>
            <person name="Churcher C."/>
            <person name="Scott C."/>
            <person name="Barrett J.C."/>
            <person name="Koch R."/>
            <person name="Rauch G.J."/>
            <person name="White S."/>
            <person name="Chow W."/>
            <person name="Kilian B."/>
            <person name="Quintais L.T."/>
            <person name="Guerra-Assuncao J.A."/>
            <person name="Zhou Y."/>
            <person name="Gu Y."/>
            <person name="Yen J."/>
            <person name="Vogel J.H."/>
            <person name="Eyre T."/>
            <person name="Redmond S."/>
            <person name="Banerjee R."/>
            <person name="Chi J."/>
            <person name="Fu B."/>
            <person name="Langley E."/>
            <person name="Maguire S.F."/>
            <person name="Laird G.K."/>
            <person name="Lloyd D."/>
            <person name="Kenyon E."/>
            <person name="Donaldson S."/>
            <person name="Sehra H."/>
            <person name="Almeida-King J."/>
            <person name="Loveland J."/>
            <person name="Trevanion S."/>
            <person name="Jones M."/>
            <person name="Quail M."/>
            <person name="Willey D."/>
            <person name="Hunt A."/>
            <person name="Burton J."/>
            <person name="Sims S."/>
            <person name="McLay K."/>
            <person name="Plumb B."/>
            <person name="Davis J."/>
            <person name="Clee C."/>
            <person name="Oliver K."/>
            <person name="Clark R."/>
            <person name="Riddle C."/>
            <person name="Elliot D."/>
            <person name="Threadgold G."/>
            <person name="Harden G."/>
            <person name="Ware D."/>
            <person name="Begum S."/>
            <person name="Mortimore B."/>
            <person name="Kerry G."/>
            <person name="Heath P."/>
            <person name="Phillimore B."/>
            <person name="Tracey A."/>
            <person name="Corby N."/>
            <person name="Dunn M."/>
            <person name="Johnson C."/>
            <person name="Wood J."/>
            <person name="Clark S."/>
            <person name="Pelan S."/>
            <person name="Griffiths G."/>
            <person name="Smith M."/>
            <person name="Glithero R."/>
            <person name="Howden P."/>
            <person name="Barker N."/>
            <person name="Lloyd C."/>
            <person name="Stevens C."/>
            <person name="Harley J."/>
            <person name="Holt K."/>
            <person name="Panagiotidis G."/>
            <person name="Lovell J."/>
            <person name="Beasley H."/>
            <person name="Henderson C."/>
            <person name="Gordon D."/>
            <person name="Auger K."/>
            <person name="Wright D."/>
            <person name="Collins J."/>
            <person name="Raisen C."/>
            <person name="Dyer L."/>
            <person name="Leung K."/>
            <person name="Robertson L."/>
            <person name="Ambridge K."/>
            <person name="Leongamornlert D."/>
            <person name="McGuire S."/>
            <person name="Gilderthorp R."/>
            <person name="Griffiths C."/>
            <person name="Manthravadi D."/>
            <person name="Nichol S."/>
            <person name="Barker G."/>
            <person name="Whitehead S."/>
            <person name="Kay M."/>
            <person name="Brown J."/>
            <person name="Murnane C."/>
            <person name="Gray E."/>
            <person name="Humphries M."/>
            <person name="Sycamore N."/>
            <person name="Barker D."/>
            <person name="Saunders D."/>
            <person name="Wallis J."/>
            <person name="Babbage A."/>
            <person name="Hammond S."/>
            <person name="Mashreghi-Mohammadi M."/>
            <person name="Barr L."/>
            <person name="Martin S."/>
            <person name="Wray P."/>
            <person name="Ellington A."/>
            <person name="Matthews N."/>
            <person name="Ellwood M."/>
            <person name="Woodmansey R."/>
            <person name="Clark G."/>
            <person name="Cooper J."/>
            <person name="Tromans A."/>
            <person name="Grafham D."/>
            <person name="Skuce C."/>
            <person name="Pandian R."/>
            <person name="Andrews R."/>
            <person name="Harrison E."/>
            <person name="Kimberley A."/>
            <person name="Garnett J."/>
            <person name="Fosker N."/>
            <person name="Hall R."/>
            <person name="Garner P."/>
            <person name="Kelly D."/>
            <person name="Bird C."/>
            <person name="Palmer S."/>
            <person name="Gehring I."/>
            <person name="Berger A."/>
            <person name="Dooley C.M."/>
            <person name="Ersan-Urun Z."/>
            <person name="Eser C."/>
            <person name="Geiger H."/>
            <person name="Geisler M."/>
            <person name="Karotki L."/>
            <person name="Kirn A."/>
            <person name="Konantz J."/>
            <person name="Konantz M."/>
            <person name="Oberlander M."/>
            <person name="Rudolph-Geiger S."/>
            <person name="Teucke M."/>
            <person name="Lanz C."/>
            <person name="Raddatz G."/>
            <person name="Osoegawa K."/>
            <person name="Zhu B."/>
            <person name="Rapp A."/>
            <person name="Widaa S."/>
            <person name="Langford C."/>
            <person name="Yang F."/>
            <person name="Schuster S.C."/>
            <person name="Carter N.P."/>
            <person name="Harrow J."/>
            <person name="Ning Z."/>
            <person name="Herrero J."/>
            <person name="Searle S.M."/>
            <person name="Enright A."/>
            <person name="Geisler R."/>
            <person name="Plasterk R.H."/>
            <person name="Lee C."/>
            <person name="Westerfield M."/>
            <person name="de Jong P.J."/>
            <person name="Zon L.I."/>
            <person name="Postlethwait J.H."/>
            <person name="Nusslein-Volhard C."/>
            <person name="Hubbard T.J."/>
            <person name="Roest Crollius H."/>
            <person name="Rogers J."/>
            <person name="Stemple D.L."/>
        </authorList>
    </citation>
    <scope>NUCLEOTIDE SEQUENCE [LARGE SCALE GENOMIC DNA]</scope>
    <source>
        <strain>Tuebingen</strain>
    </source>
</reference>
<reference key="3">
    <citation type="submission" date="2005-03" db="EMBL/GenBank/DDBJ databases">
        <authorList>
            <consortium name="NIH - Zebrafish Gene Collection (ZGC) project"/>
        </authorList>
    </citation>
    <scope>NUCLEOTIDE SEQUENCE [LARGE SCALE MRNA]</scope>
    <source>
        <tissue>Embryo</tissue>
    </source>
</reference>
<keyword id="KW-0067">ATP-binding</keyword>
<keyword id="KW-0963">Cytoplasm</keyword>
<keyword id="KW-0217">Developmental protein</keyword>
<keyword id="KW-0418">Kinase</keyword>
<keyword id="KW-0547">Nucleotide-binding</keyword>
<keyword id="KW-0539">Nucleus</keyword>
<keyword id="KW-1185">Reference proteome</keyword>
<keyword id="KW-0808">Transferase</keyword>
<organism>
    <name type="scientific">Danio rerio</name>
    <name type="common">Zebrafish</name>
    <name type="synonym">Brachydanio rerio</name>
    <dbReference type="NCBI Taxonomy" id="7955"/>
    <lineage>
        <taxon>Eukaryota</taxon>
        <taxon>Metazoa</taxon>
        <taxon>Chordata</taxon>
        <taxon>Craniata</taxon>
        <taxon>Vertebrata</taxon>
        <taxon>Euteleostomi</taxon>
        <taxon>Actinopterygii</taxon>
        <taxon>Neopterygii</taxon>
        <taxon>Teleostei</taxon>
        <taxon>Ostariophysi</taxon>
        <taxon>Cypriniformes</taxon>
        <taxon>Danionidae</taxon>
        <taxon>Danioninae</taxon>
        <taxon>Danio</taxon>
    </lineage>
</organism>